<reference key="1">
    <citation type="journal article" date="2004" name="Proc. Natl. Acad. Sci. U.S.A.">
        <title>Genome sequence of Picrophilus torridus and its implications for life around pH 0.</title>
        <authorList>
            <person name="Fuetterer O."/>
            <person name="Angelov A."/>
            <person name="Liesegang H."/>
            <person name="Gottschalk G."/>
            <person name="Schleper C."/>
            <person name="Schepers B."/>
            <person name="Dock C."/>
            <person name="Antranikian G."/>
            <person name="Liebl W."/>
        </authorList>
    </citation>
    <scope>NUCLEOTIDE SEQUENCE [LARGE SCALE GENOMIC DNA]</scope>
    <source>
        <strain>ATCC 700027 / DSM 9790 / JCM 10055 / NBRC 100828 / KAW 2/3</strain>
    </source>
</reference>
<proteinExistence type="inferred from homology"/>
<dbReference type="EMBL" id="AE017261">
    <property type="protein sequence ID" value="AAT43426.1"/>
    <property type="molecule type" value="Genomic_DNA"/>
</dbReference>
<dbReference type="RefSeq" id="WP_011177642.1">
    <property type="nucleotide sequence ID" value="NC_005877.1"/>
</dbReference>
<dbReference type="SMR" id="Q6L0S6"/>
<dbReference type="STRING" id="263820.PTO0841"/>
<dbReference type="PaxDb" id="263820-PTO0841"/>
<dbReference type="GeneID" id="2844535"/>
<dbReference type="KEGG" id="pto:PTO0841"/>
<dbReference type="PATRIC" id="fig|263820.9.peg.879"/>
<dbReference type="eggNOG" id="arCOG02846">
    <property type="taxonomic scope" value="Archaea"/>
</dbReference>
<dbReference type="HOGENOM" id="CLU_017633_0_7_2"/>
<dbReference type="InParanoid" id="Q6L0S6"/>
<dbReference type="OrthoDB" id="8967at2157"/>
<dbReference type="Proteomes" id="UP000000438">
    <property type="component" value="Chromosome"/>
</dbReference>
<dbReference type="GO" id="GO:0005737">
    <property type="term" value="C:cytoplasm"/>
    <property type="evidence" value="ECO:0007669"/>
    <property type="project" value="UniProtKB-SubCell"/>
</dbReference>
<dbReference type="GO" id="GO:0005524">
    <property type="term" value="F:ATP binding"/>
    <property type="evidence" value="ECO:0007669"/>
    <property type="project" value="InterPro"/>
</dbReference>
<dbReference type="GO" id="GO:0031072">
    <property type="term" value="F:heat shock protein binding"/>
    <property type="evidence" value="ECO:0007669"/>
    <property type="project" value="InterPro"/>
</dbReference>
<dbReference type="GO" id="GO:0051082">
    <property type="term" value="F:unfolded protein binding"/>
    <property type="evidence" value="ECO:0007669"/>
    <property type="project" value="UniProtKB-UniRule"/>
</dbReference>
<dbReference type="GO" id="GO:0008270">
    <property type="term" value="F:zinc ion binding"/>
    <property type="evidence" value="ECO:0007669"/>
    <property type="project" value="UniProtKB-UniRule"/>
</dbReference>
<dbReference type="GO" id="GO:0051085">
    <property type="term" value="P:chaperone cofactor-dependent protein refolding"/>
    <property type="evidence" value="ECO:0007669"/>
    <property type="project" value="TreeGrafter"/>
</dbReference>
<dbReference type="GO" id="GO:0006260">
    <property type="term" value="P:DNA replication"/>
    <property type="evidence" value="ECO:0007669"/>
    <property type="project" value="UniProtKB-KW"/>
</dbReference>
<dbReference type="GO" id="GO:0042026">
    <property type="term" value="P:protein refolding"/>
    <property type="evidence" value="ECO:0007669"/>
    <property type="project" value="TreeGrafter"/>
</dbReference>
<dbReference type="GO" id="GO:0009408">
    <property type="term" value="P:response to heat"/>
    <property type="evidence" value="ECO:0007669"/>
    <property type="project" value="InterPro"/>
</dbReference>
<dbReference type="CDD" id="cd06257">
    <property type="entry name" value="DnaJ"/>
    <property type="match status" value="1"/>
</dbReference>
<dbReference type="CDD" id="cd10747">
    <property type="entry name" value="DnaJ_C"/>
    <property type="match status" value="1"/>
</dbReference>
<dbReference type="CDD" id="cd10719">
    <property type="entry name" value="DnaJ_zf"/>
    <property type="match status" value="1"/>
</dbReference>
<dbReference type="FunFam" id="1.10.287.110:FF:000034">
    <property type="entry name" value="Chaperone protein DnaJ"/>
    <property type="match status" value="1"/>
</dbReference>
<dbReference type="FunFam" id="2.60.260.20:FF:000005">
    <property type="entry name" value="Chaperone protein dnaJ 1, mitochondrial"/>
    <property type="match status" value="1"/>
</dbReference>
<dbReference type="FunFam" id="2.10.230.10:FF:000002">
    <property type="entry name" value="Molecular chaperone DnaJ"/>
    <property type="match status" value="1"/>
</dbReference>
<dbReference type="Gene3D" id="1.10.287.110">
    <property type="entry name" value="DnaJ domain"/>
    <property type="match status" value="1"/>
</dbReference>
<dbReference type="Gene3D" id="2.10.230.10">
    <property type="entry name" value="Heat shock protein DnaJ, cysteine-rich domain"/>
    <property type="match status" value="1"/>
</dbReference>
<dbReference type="Gene3D" id="2.60.260.20">
    <property type="entry name" value="Urease metallochaperone UreE, N-terminal domain"/>
    <property type="match status" value="2"/>
</dbReference>
<dbReference type="HAMAP" id="MF_01152">
    <property type="entry name" value="DnaJ"/>
    <property type="match status" value="1"/>
</dbReference>
<dbReference type="InterPro" id="IPR012724">
    <property type="entry name" value="DnaJ"/>
</dbReference>
<dbReference type="InterPro" id="IPR002939">
    <property type="entry name" value="DnaJ_C"/>
</dbReference>
<dbReference type="InterPro" id="IPR001623">
    <property type="entry name" value="DnaJ_domain"/>
</dbReference>
<dbReference type="InterPro" id="IPR018253">
    <property type="entry name" value="DnaJ_domain_CS"/>
</dbReference>
<dbReference type="InterPro" id="IPR008971">
    <property type="entry name" value="HSP40/DnaJ_pept-bd"/>
</dbReference>
<dbReference type="InterPro" id="IPR001305">
    <property type="entry name" value="HSP_DnaJ_Cys-rich_dom"/>
</dbReference>
<dbReference type="InterPro" id="IPR036410">
    <property type="entry name" value="HSP_DnaJ_Cys-rich_dom_sf"/>
</dbReference>
<dbReference type="InterPro" id="IPR036869">
    <property type="entry name" value="J_dom_sf"/>
</dbReference>
<dbReference type="NCBIfam" id="TIGR02349">
    <property type="entry name" value="DnaJ_bact"/>
    <property type="match status" value="1"/>
</dbReference>
<dbReference type="NCBIfam" id="NF008035">
    <property type="entry name" value="PRK10767.1"/>
    <property type="match status" value="1"/>
</dbReference>
<dbReference type="NCBIfam" id="NF010883">
    <property type="entry name" value="PRK14290.1"/>
    <property type="match status" value="1"/>
</dbReference>
<dbReference type="PANTHER" id="PTHR43096:SF48">
    <property type="entry name" value="CHAPERONE PROTEIN DNAJ"/>
    <property type="match status" value="1"/>
</dbReference>
<dbReference type="PANTHER" id="PTHR43096">
    <property type="entry name" value="DNAJ HOMOLOG 1, MITOCHONDRIAL-RELATED"/>
    <property type="match status" value="1"/>
</dbReference>
<dbReference type="Pfam" id="PF00226">
    <property type="entry name" value="DnaJ"/>
    <property type="match status" value="1"/>
</dbReference>
<dbReference type="Pfam" id="PF01556">
    <property type="entry name" value="DnaJ_C"/>
    <property type="match status" value="1"/>
</dbReference>
<dbReference type="Pfam" id="PF00684">
    <property type="entry name" value="DnaJ_CXXCXGXG"/>
    <property type="match status" value="1"/>
</dbReference>
<dbReference type="PRINTS" id="PR00625">
    <property type="entry name" value="JDOMAIN"/>
</dbReference>
<dbReference type="SMART" id="SM00271">
    <property type="entry name" value="DnaJ"/>
    <property type="match status" value="1"/>
</dbReference>
<dbReference type="SUPFAM" id="SSF46565">
    <property type="entry name" value="Chaperone J-domain"/>
    <property type="match status" value="1"/>
</dbReference>
<dbReference type="SUPFAM" id="SSF57938">
    <property type="entry name" value="DnaJ/Hsp40 cysteine-rich domain"/>
    <property type="match status" value="1"/>
</dbReference>
<dbReference type="SUPFAM" id="SSF49493">
    <property type="entry name" value="HSP40/DnaJ peptide-binding domain"/>
    <property type="match status" value="2"/>
</dbReference>
<dbReference type="PROSITE" id="PS00636">
    <property type="entry name" value="DNAJ_1"/>
    <property type="match status" value="1"/>
</dbReference>
<dbReference type="PROSITE" id="PS50076">
    <property type="entry name" value="DNAJ_2"/>
    <property type="match status" value="1"/>
</dbReference>
<dbReference type="PROSITE" id="PS51188">
    <property type="entry name" value="ZF_CR"/>
    <property type="match status" value="1"/>
</dbReference>
<keyword id="KW-0143">Chaperone</keyword>
<keyword id="KW-0963">Cytoplasm</keyword>
<keyword id="KW-0235">DNA replication</keyword>
<keyword id="KW-0479">Metal-binding</keyword>
<keyword id="KW-0677">Repeat</keyword>
<keyword id="KW-0346">Stress response</keyword>
<keyword id="KW-0862">Zinc</keyword>
<keyword id="KW-0863">Zinc-finger</keyword>
<feature type="chain" id="PRO_0000070952" description="Chaperone protein DnaJ">
    <location>
        <begin position="1"/>
        <end position="357"/>
    </location>
</feature>
<feature type="domain" description="J" evidence="1">
    <location>
        <begin position="4"/>
        <end position="69"/>
    </location>
</feature>
<feature type="repeat" description="CXXCXGXG motif">
    <location>
        <begin position="145"/>
        <end position="152"/>
    </location>
</feature>
<feature type="repeat" description="CXXCXGXG motif">
    <location>
        <begin position="161"/>
        <end position="168"/>
    </location>
</feature>
<feature type="repeat" description="CXXCXGXG motif">
    <location>
        <begin position="187"/>
        <end position="194"/>
    </location>
</feature>
<feature type="repeat" description="CXXCXGXG motif">
    <location>
        <begin position="201"/>
        <end position="208"/>
    </location>
</feature>
<feature type="zinc finger region" description="CR-type" evidence="1">
    <location>
        <begin position="132"/>
        <end position="213"/>
    </location>
</feature>
<feature type="binding site" evidence="1">
    <location>
        <position position="145"/>
    </location>
    <ligand>
        <name>Zn(2+)</name>
        <dbReference type="ChEBI" id="CHEBI:29105"/>
        <label>1</label>
    </ligand>
</feature>
<feature type="binding site" evidence="1">
    <location>
        <position position="148"/>
    </location>
    <ligand>
        <name>Zn(2+)</name>
        <dbReference type="ChEBI" id="CHEBI:29105"/>
        <label>1</label>
    </ligand>
</feature>
<feature type="binding site" evidence="1">
    <location>
        <position position="161"/>
    </location>
    <ligand>
        <name>Zn(2+)</name>
        <dbReference type="ChEBI" id="CHEBI:29105"/>
        <label>2</label>
    </ligand>
</feature>
<feature type="binding site" evidence="1">
    <location>
        <position position="164"/>
    </location>
    <ligand>
        <name>Zn(2+)</name>
        <dbReference type="ChEBI" id="CHEBI:29105"/>
        <label>2</label>
    </ligand>
</feature>
<feature type="binding site" evidence="1">
    <location>
        <position position="187"/>
    </location>
    <ligand>
        <name>Zn(2+)</name>
        <dbReference type="ChEBI" id="CHEBI:29105"/>
        <label>2</label>
    </ligand>
</feature>
<feature type="binding site" evidence="1">
    <location>
        <position position="190"/>
    </location>
    <ligand>
        <name>Zn(2+)</name>
        <dbReference type="ChEBI" id="CHEBI:29105"/>
        <label>2</label>
    </ligand>
</feature>
<feature type="binding site" evidence="1">
    <location>
        <position position="201"/>
    </location>
    <ligand>
        <name>Zn(2+)</name>
        <dbReference type="ChEBI" id="CHEBI:29105"/>
        <label>1</label>
    </ligand>
</feature>
<feature type="binding site" evidence="1">
    <location>
        <position position="204"/>
    </location>
    <ligand>
        <name>Zn(2+)</name>
        <dbReference type="ChEBI" id="CHEBI:29105"/>
        <label>1</label>
    </ligand>
</feature>
<accession>Q6L0S6</accession>
<sequence length="357" mass="40043">MAKDYYAILGVDRNASQDDIKKAFRELAKKYHPDANPGNKEAEEKFKEIAEAYEVLSDPQKRKQYDETGTTDFNAGSGFNWQDFTHFDDINDIFNQFFGGNFGDTFFGGYTNQPDLDIYLRVNISLEDAYYGASKNVKYRRNAMCEHCSGTGAENKVLITCPTCHGSGQERITRGQGFFRMVTVTECRTCHGRGKIPQKPCTVCHGTGTVSKNEDISVNIPKGADTNLKLRLKNMGNSYGGVTGDLYIVLIVNNPPGIRRSGQDIYVEHTIDFPEAALGGEEEIKLFRESYNLKIPAGTQPGEILKIKGAGMPRINGHGSGDLNVIIKIEVPKHLTSRQKELLEEFRNEKKKSWFHF</sequence>
<gene>
    <name evidence="1" type="primary">dnaJ</name>
    <name type="ordered locus">PTO0841</name>
</gene>
<organism>
    <name type="scientific">Picrophilus torridus (strain ATCC 700027 / DSM 9790 / JCM 10055 / NBRC 100828 / KAW 2/3)</name>
    <dbReference type="NCBI Taxonomy" id="1122961"/>
    <lineage>
        <taxon>Archaea</taxon>
        <taxon>Methanobacteriati</taxon>
        <taxon>Thermoplasmatota</taxon>
        <taxon>Thermoplasmata</taxon>
        <taxon>Thermoplasmatales</taxon>
        <taxon>Picrophilaceae</taxon>
        <taxon>Picrophilus</taxon>
    </lineage>
</organism>
<comment type="function">
    <text evidence="1">Participates actively in the response to hyperosmotic and heat shock by preventing the aggregation of stress-denatured proteins and by disaggregating proteins, also in an autonomous, DnaK-independent fashion. Unfolded proteins bind initially to DnaJ; upon interaction with the DnaJ-bound protein, DnaK hydrolyzes its bound ATP, resulting in the formation of a stable complex. GrpE releases ADP from DnaK; ATP binding to DnaK triggers the release of the substrate protein, thus completing the reaction cycle. Several rounds of ATP-dependent interactions between DnaJ, DnaK and GrpE are required for fully efficient folding. Also involved, together with DnaK and GrpE, in the DNA replication of plasmids through activation of initiation proteins.</text>
</comment>
<comment type="cofactor">
    <cofactor evidence="1">
        <name>Zn(2+)</name>
        <dbReference type="ChEBI" id="CHEBI:29105"/>
    </cofactor>
    <text evidence="1">Binds 2 Zn(2+) ions per monomer.</text>
</comment>
<comment type="subunit">
    <text evidence="1">Homodimer.</text>
</comment>
<comment type="subcellular location">
    <subcellularLocation>
        <location evidence="1">Cytoplasm</location>
    </subcellularLocation>
</comment>
<comment type="domain">
    <text evidence="1">The J domain is necessary and sufficient to stimulate DnaK ATPase activity. Zinc center 1 plays an important role in the autonomous, DnaK-independent chaperone activity of DnaJ. Zinc center 2 is essential for interaction with DnaK and for DnaJ activity.</text>
</comment>
<comment type="similarity">
    <text evidence="1">Belongs to the DnaJ family.</text>
</comment>
<evidence type="ECO:0000255" key="1">
    <source>
        <dbReference type="HAMAP-Rule" id="MF_01152"/>
    </source>
</evidence>
<name>DNAJ_PICTO</name>
<protein>
    <recommendedName>
        <fullName evidence="1">Chaperone protein DnaJ</fullName>
    </recommendedName>
</protein>